<keyword id="KW-0067">ATP-binding</keyword>
<keyword id="KW-1015">Disulfide bond</keyword>
<keyword id="KW-0418">Kinase</keyword>
<keyword id="KW-0460">Magnesium</keyword>
<keyword id="KW-0547">Nucleotide-binding</keyword>
<keyword id="KW-0684">Rhamnose metabolism</keyword>
<keyword id="KW-0808">Transferase</keyword>
<evidence type="ECO:0000255" key="1">
    <source>
        <dbReference type="HAMAP-Rule" id="MF_01535"/>
    </source>
</evidence>
<comment type="function">
    <text evidence="1">Involved in the catabolism of L-rhamnose (6-deoxy-L-mannose). Catalyzes the transfer of the gamma-phosphate group from ATP to the 1-hydroxyl group of L-rhamnulose to yield L-rhamnulose 1-phosphate.</text>
</comment>
<comment type="catalytic activity">
    <reaction evidence="1">
        <text>L-rhamnulose + ATP = L-rhamnulose 1-phosphate + ADP + H(+)</text>
        <dbReference type="Rhea" id="RHEA:20117"/>
        <dbReference type="ChEBI" id="CHEBI:15378"/>
        <dbReference type="ChEBI" id="CHEBI:17897"/>
        <dbReference type="ChEBI" id="CHEBI:30616"/>
        <dbReference type="ChEBI" id="CHEBI:58313"/>
        <dbReference type="ChEBI" id="CHEBI:456216"/>
        <dbReference type="EC" id="2.7.1.5"/>
    </reaction>
</comment>
<comment type="cofactor">
    <cofactor evidence="1">
        <name>Mg(2+)</name>
        <dbReference type="ChEBI" id="CHEBI:18420"/>
    </cofactor>
</comment>
<comment type="pathway">
    <text evidence="1">Carbohydrate degradation; L-rhamnose degradation; glycerone phosphate from L-rhamnose: step 2/3.</text>
</comment>
<comment type="subunit">
    <text evidence="1">Monomer.</text>
</comment>
<comment type="similarity">
    <text evidence="1">Belongs to the rhamnulokinase family.</text>
</comment>
<protein>
    <recommendedName>
        <fullName evidence="1">Rhamnulokinase</fullName>
        <shortName evidence="1">RhaB</shortName>
        <ecNumber evidence="1">2.7.1.5</ecNumber>
    </recommendedName>
    <alternativeName>
        <fullName evidence="1">ATP:L-rhamnulose phosphotransferase</fullName>
    </alternativeName>
    <alternativeName>
        <fullName evidence="1">L-rhamnulose 1-kinase</fullName>
    </alternativeName>
    <alternativeName>
        <fullName evidence="1">Rhamnulose kinase</fullName>
    </alternativeName>
</protein>
<organism>
    <name type="scientific">Escherichia fergusonii (strain ATCC 35469 / DSM 13698 / CCUG 18766 / IAM 14443 / JCM 21226 / LMG 7866 / NBRC 102419 / NCTC 12128 / CDC 0568-73)</name>
    <dbReference type="NCBI Taxonomy" id="585054"/>
    <lineage>
        <taxon>Bacteria</taxon>
        <taxon>Pseudomonadati</taxon>
        <taxon>Pseudomonadota</taxon>
        <taxon>Gammaproteobacteria</taxon>
        <taxon>Enterobacterales</taxon>
        <taxon>Enterobacteriaceae</taxon>
        <taxon>Escherichia</taxon>
    </lineage>
</organism>
<sequence length="489" mass="54032">MTFRNCVAVDLGASSGRVMLARYERECRSLTLREIHRFNNGLHSQNGYVTWDVDSLESAIRLGLNKVCEEGIRIDSIGIDTWGVDFVLLDQQGQRVGLPVAYRDSRTHGLMALAQKQLGKSDIYQRSGIQFLPFNTLYQLRALTEQQPELIPHIAHALLMPDYFSYRLTGKMNWEYTNATTTQLVNINSDDWDETLLAWSGANKAWFGRPTHPGNVIGHWICPQGNEIPVVAVASHDTASAVIASPLNGSRAAYLSSGTWSLMGFESQTPFTNDTALAANITNEGGAEGRYRVLKNIMGLWLLQRVLQERQINDLPALIAATQALPACRFIINPNDDRFINPDEMCSEIQAVCRETAQPIPESDAELGRCIFDSLALLYADVLHELAQLRGEDFSQLHIVGGGCQNTLLNQLCADACGIRVIAGPVEASTLGNIGIQLMALDELNNVDDFRQVVSTTANLTTFTPNPDSEIAHYVAQIHSTRQTKELCA</sequence>
<gene>
    <name evidence="1" type="primary">rhaB</name>
    <name type="ordered locus">EFER_3867</name>
</gene>
<feature type="chain" id="PRO_1000146546" description="Rhamnulokinase">
    <location>
        <begin position="1"/>
        <end position="489"/>
    </location>
</feature>
<feature type="active site" description="Proton acceptor" evidence="1">
    <location>
        <position position="237"/>
    </location>
</feature>
<feature type="binding site" evidence="1">
    <location>
        <begin position="13"/>
        <end position="17"/>
    </location>
    <ligand>
        <name>ATP</name>
        <dbReference type="ChEBI" id="CHEBI:30616"/>
    </ligand>
</feature>
<feature type="binding site" evidence="1">
    <location>
        <position position="83"/>
    </location>
    <ligand>
        <name>substrate</name>
    </ligand>
</feature>
<feature type="binding site" evidence="1">
    <location>
        <begin position="236"/>
        <end position="238"/>
    </location>
    <ligand>
        <name>substrate</name>
    </ligand>
</feature>
<feature type="binding site" evidence="1">
    <location>
        <position position="259"/>
    </location>
    <ligand>
        <name>ATP</name>
        <dbReference type="ChEBI" id="CHEBI:30616"/>
    </ligand>
</feature>
<feature type="binding site" evidence="1">
    <location>
        <position position="296"/>
    </location>
    <ligand>
        <name>substrate</name>
    </ligand>
</feature>
<feature type="binding site" evidence="1">
    <location>
        <position position="304"/>
    </location>
    <ligand>
        <name>ATP</name>
        <dbReference type="ChEBI" id="CHEBI:30616"/>
    </ligand>
</feature>
<feature type="binding site" evidence="1">
    <location>
        <position position="402"/>
    </location>
    <ligand>
        <name>ATP</name>
        <dbReference type="ChEBI" id="CHEBI:30616"/>
    </ligand>
</feature>
<feature type="disulfide bond" evidence="1">
    <location>
        <begin position="68"/>
        <end position="222"/>
    </location>
</feature>
<feature type="disulfide bond" evidence="1">
    <location>
        <begin position="353"/>
        <end position="370"/>
    </location>
</feature>
<feature type="disulfide bond" evidence="1">
    <location>
        <begin position="413"/>
        <end position="417"/>
    </location>
</feature>
<dbReference type="EC" id="2.7.1.5" evidence="1"/>
<dbReference type="EMBL" id="CU928158">
    <property type="protein sequence ID" value="CAQ91302.1"/>
    <property type="molecule type" value="Genomic_DNA"/>
</dbReference>
<dbReference type="RefSeq" id="WP_000144065.1">
    <property type="nucleotide sequence ID" value="NC_011740.1"/>
</dbReference>
<dbReference type="SMR" id="B7LVD9"/>
<dbReference type="GeneID" id="75059461"/>
<dbReference type="KEGG" id="efe:EFER_3867"/>
<dbReference type="HOGENOM" id="CLU_039395_0_0_6"/>
<dbReference type="OrthoDB" id="9761504at2"/>
<dbReference type="UniPathway" id="UPA00541">
    <property type="reaction ID" value="UER00602"/>
</dbReference>
<dbReference type="Proteomes" id="UP000000745">
    <property type="component" value="Chromosome"/>
</dbReference>
<dbReference type="GO" id="GO:0005829">
    <property type="term" value="C:cytosol"/>
    <property type="evidence" value="ECO:0007669"/>
    <property type="project" value="TreeGrafter"/>
</dbReference>
<dbReference type="GO" id="GO:0005524">
    <property type="term" value="F:ATP binding"/>
    <property type="evidence" value="ECO:0007669"/>
    <property type="project" value="UniProtKB-KW"/>
</dbReference>
<dbReference type="GO" id="GO:0004370">
    <property type="term" value="F:glycerol kinase activity"/>
    <property type="evidence" value="ECO:0007669"/>
    <property type="project" value="TreeGrafter"/>
</dbReference>
<dbReference type="GO" id="GO:0008993">
    <property type="term" value="F:rhamnulokinase activity"/>
    <property type="evidence" value="ECO:0007669"/>
    <property type="project" value="UniProtKB-UniRule"/>
</dbReference>
<dbReference type="GO" id="GO:0006071">
    <property type="term" value="P:glycerol metabolic process"/>
    <property type="evidence" value="ECO:0007669"/>
    <property type="project" value="TreeGrafter"/>
</dbReference>
<dbReference type="GO" id="GO:0019301">
    <property type="term" value="P:rhamnose catabolic process"/>
    <property type="evidence" value="ECO:0007669"/>
    <property type="project" value="UniProtKB-UniRule"/>
</dbReference>
<dbReference type="CDD" id="cd07771">
    <property type="entry name" value="ASKHA_NBD_FGGY_RhaB-like"/>
    <property type="match status" value="1"/>
</dbReference>
<dbReference type="FunFam" id="3.30.420.40:FF:000064">
    <property type="entry name" value="Rhamnulokinase"/>
    <property type="match status" value="1"/>
</dbReference>
<dbReference type="FunFam" id="3.30.420.40:FF:000073">
    <property type="entry name" value="Rhamnulokinase"/>
    <property type="match status" value="1"/>
</dbReference>
<dbReference type="Gene3D" id="3.30.420.40">
    <property type="match status" value="2"/>
</dbReference>
<dbReference type="HAMAP" id="MF_01535">
    <property type="entry name" value="Rhamnulokinase"/>
    <property type="match status" value="1"/>
</dbReference>
<dbReference type="InterPro" id="IPR043129">
    <property type="entry name" value="ATPase_NBD"/>
</dbReference>
<dbReference type="InterPro" id="IPR018485">
    <property type="entry name" value="FGGY_C"/>
</dbReference>
<dbReference type="InterPro" id="IPR018484">
    <property type="entry name" value="FGGY_N"/>
</dbReference>
<dbReference type="InterPro" id="IPR013449">
    <property type="entry name" value="Rhamnulokinase"/>
</dbReference>
<dbReference type="NCBIfam" id="NF007925">
    <property type="entry name" value="PRK10640.1"/>
    <property type="match status" value="1"/>
</dbReference>
<dbReference type="NCBIfam" id="TIGR02627">
    <property type="entry name" value="rhamnulo_kin"/>
    <property type="match status" value="1"/>
</dbReference>
<dbReference type="PANTHER" id="PTHR10196:SF93">
    <property type="entry name" value="L-RHAMNULOKINASE"/>
    <property type="match status" value="1"/>
</dbReference>
<dbReference type="PANTHER" id="PTHR10196">
    <property type="entry name" value="SUGAR KINASE"/>
    <property type="match status" value="1"/>
</dbReference>
<dbReference type="Pfam" id="PF02782">
    <property type="entry name" value="FGGY_C"/>
    <property type="match status" value="1"/>
</dbReference>
<dbReference type="Pfam" id="PF00370">
    <property type="entry name" value="FGGY_N"/>
    <property type="match status" value="1"/>
</dbReference>
<dbReference type="SUPFAM" id="SSF53067">
    <property type="entry name" value="Actin-like ATPase domain"/>
    <property type="match status" value="2"/>
</dbReference>
<proteinExistence type="inferred from homology"/>
<name>RHAB_ESCF3</name>
<reference key="1">
    <citation type="journal article" date="2009" name="PLoS Genet.">
        <title>Organised genome dynamics in the Escherichia coli species results in highly diverse adaptive paths.</title>
        <authorList>
            <person name="Touchon M."/>
            <person name="Hoede C."/>
            <person name="Tenaillon O."/>
            <person name="Barbe V."/>
            <person name="Baeriswyl S."/>
            <person name="Bidet P."/>
            <person name="Bingen E."/>
            <person name="Bonacorsi S."/>
            <person name="Bouchier C."/>
            <person name="Bouvet O."/>
            <person name="Calteau A."/>
            <person name="Chiapello H."/>
            <person name="Clermont O."/>
            <person name="Cruveiller S."/>
            <person name="Danchin A."/>
            <person name="Diard M."/>
            <person name="Dossat C."/>
            <person name="Karoui M.E."/>
            <person name="Frapy E."/>
            <person name="Garry L."/>
            <person name="Ghigo J.M."/>
            <person name="Gilles A.M."/>
            <person name="Johnson J."/>
            <person name="Le Bouguenec C."/>
            <person name="Lescat M."/>
            <person name="Mangenot S."/>
            <person name="Martinez-Jehanne V."/>
            <person name="Matic I."/>
            <person name="Nassif X."/>
            <person name="Oztas S."/>
            <person name="Petit M.A."/>
            <person name="Pichon C."/>
            <person name="Rouy Z."/>
            <person name="Ruf C.S."/>
            <person name="Schneider D."/>
            <person name="Tourret J."/>
            <person name="Vacherie B."/>
            <person name="Vallenet D."/>
            <person name="Medigue C."/>
            <person name="Rocha E.P.C."/>
            <person name="Denamur E."/>
        </authorList>
    </citation>
    <scope>NUCLEOTIDE SEQUENCE [LARGE SCALE GENOMIC DNA]</scope>
    <source>
        <strain>ATCC 35469 / DSM 13698 / BCRC 15582 / CCUG 18766 / IAM 14443 / JCM 21226 / LMG 7866 / NBRC 102419 / NCTC 12128 / CDC 0568-73</strain>
    </source>
</reference>
<accession>B7LVD9</accession>